<protein>
    <recommendedName>
        <fullName evidence="1">Phosphoglycerol transferase I</fullName>
        <ecNumber evidence="1">2.7.8.20</ecNumber>
    </recommendedName>
    <alternativeName>
        <fullName evidence="1">Phosphatidylglycerol--membrane-oligosaccharide glycerophosphotransferase</fullName>
    </alternativeName>
</protein>
<proteinExistence type="inferred from homology"/>
<gene>
    <name evidence="1" type="primary">mdoB</name>
    <name evidence="1" type="synonym">opgB</name>
    <name type="ordered locus">EFER_4396</name>
</gene>
<evidence type="ECO:0000255" key="1">
    <source>
        <dbReference type="HAMAP-Rule" id="MF_01070"/>
    </source>
</evidence>
<accession>B7LMY4</accession>
<comment type="function">
    <text evidence="1">Transfers a phosphoglycerol residue from phosphatidylglycerol to the membrane-bound nascent glucan backbones.</text>
</comment>
<comment type="catalytic activity">
    <reaction evidence="1">
        <text>a phosphatidylglycerol + a membrane-derived-oligosaccharide D-glucose = a 1,2-diacyl-sn-glycerol + a membrane-derived-oligosaccharide 6-(glycerophospho)-D-glucose.</text>
        <dbReference type="EC" id="2.7.8.20"/>
    </reaction>
</comment>
<comment type="pathway">
    <text evidence="1">Glycan metabolism; osmoregulated periplasmic glucan (OPG) biosynthesis.</text>
</comment>
<comment type="subcellular location">
    <subcellularLocation>
        <location evidence="1">Cell inner membrane</location>
        <topology evidence="1">Multi-pass membrane protein</topology>
    </subcellularLocation>
</comment>
<comment type="similarity">
    <text evidence="1">Belongs to the OpgB family.</text>
</comment>
<reference key="1">
    <citation type="journal article" date="2009" name="PLoS Genet.">
        <title>Organised genome dynamics in the Escherichia coli species results in highly diverse adaptive paths.</title>
        <authorList>
            <person name="Touchon M."/>
            <person name="Hoede C."/>
            <person name="Tenaillon O."/>
            <person name="Barbe V."/>
            <person name="Baeriswyl S."/>
            <person name="Bidet P."/>
            <person name="Bingen E."/>
            <person name="Bonacorsi S."/>
            <person name="Bouchier C."/>
            <person name="Bouvet O."/>
            <person name="Calteau A."/>
            <person name="Chiapello H."/>
            <person name="Clermont O."/>
            <person name="Cruveiller S."/>
            <person name="Danchin A."/>
            <person name="Diard M."/>
            <person name="Dossat C."/>
            <person name="Karoui M.E."/>
            <person name="Frapy E."/>
            <person name="Garry L."/>
            <person name="Ghigo J.M."/>
            <person name="Gilles A.M."/>
            <person name="Johnson J."/>
            <person name="Le Bouguenec C."/>
            <person name="Lescat M."/>
            <person name="Mangenot S."/>
            <person name="Martinez-Jehanne V."/>
            <person name="Matic I."/>
            <person name="Nassif X."/>
            <person name="Oztas S."/>
            <person name="Petit M.A."/>
            <person name="Pichon C."/>
            <person name="Rouy Z."/>
            <person name="Ruf C.S."/>
            <person name="Schneider D."/>
            <person name="Tourret J."/>
            <person name="Vacherie B."/>
            <person name="Vallenet D."/>
            <person name="Medigue C."/>
            <person name="Rocha E.P.C."/>
            <person name="Denamur E."/>
        </authorList>
    </citation>
    <scope>NUCLEOTIDE SEQUENCE [LARGE SCALE GENOMIC DNA]</scope>
    <source>
        <strain>ATCC 35469 / DSM 13698 / BCRC 15582 / CCUG 18766 / IAM 14443 / JCM 21226 / LMG 7866 / NBRC 102419 / NCTC 12128 / CDC 0568-73</strain>
    </source>
</reference>
<organism>
    <name type="scientific">Escherichia fergusonii (strain ATCC 35469 / DSM 13698 / CCUG 18766 / IAM 14443 / JCM 21226 / LMG 7866 / NBRC 102419 / NCTC 12128 / CDC 0568-73)</name>
    <dbReference type="NCBI Taxonomy" id="585054"/>
    <lineage>
        <taxon>Bacteria</taxon>
        <taxon>Pseudomonadati</taxon>
        <taxon>Pseudomonadota</taxon>
        <taxon>Gammaproteobacteria</taxon>
        <taxon>Enterobacterales</taxon>
        <taxon>Enterobacteriaceae</taxon>
        <taxon>Escherichia</taxon>
    </lineage>
</organism>
<name>OPGB_ESCF3</name>
<keyword id="KW-0997">Cell inner membrane</keyword>
<keyword id="KW-1003">Cell membrane</keyword>
<keyword id="KW-0472">Membrane</keyword>
<keyword id="KW-0808">Transferase</keyword>
<keyword id="KW-0812">Transmembrane</keyword>
<keyword id="KW-1133">Transmembrane helix</keyword>
<dbReference type="EC" id="2.7.8.20" evidence="1"/>
<dbReference type="EMBL" id="CU928158">
    <property type="protein sequence ID" value="CAQ91812.1"/>
    <property type="molecule type" value="Genomic_DNA"/>
</dbReference>
<dbReference type="RefSeq" id="WP_001292693.1">
    <property type="nucleotide sequence ID" value="NC_011740.1"/>
</dbReference>
<dbReference type="SMR" id="B7LMY4"/>
<dbReference type="GeneID" id="75059022"/>
<dbReference type="KEGG" id="efe:EFER_4396"/>
<dbReference type="HOGENOM" id="CLU_023986_1_0_6"/>
<dbReference type="OrthoDB" id="9760224at2"/>
<dbReference type="UniPathway" id="UPA00637"/>
<dbReference type="Proteomes" id="UP000000745">
    <property type="component" value="Chromosome"/>
</dbReference>
<dbReference type="GO" id="GO:0005886">
    <property type="term" value="C:plasma membrane"/>
    <property type="evidence" value="ECO:0007669"/>
    <property type="project" value="UniProtKB-SubCell"/>
</dbReference>
<dbReference type="GO" id="GO:0008960">
    <property type="term" value="F:phosphatidylglycerol-membrane-oligosaccharide glycerophosphotransferase activity"/>
    <property type="evidence" value="ECO:0007669"/>
    <property type="project" value="UniProtKB-UniRule"/>
</dbReference>
<dbReference type="GO" id="GO:0009250">
    <property type="term" value="P:glucan biosynthetic process"/>
    <property type="evidence" value="ECO:0007669"/>
    <property type="project" value="UniProtKB-UniRule"/>
</dbReference>
<dbReference type="CDD" id="cd16015">
    <property type="entry name" value="LTA_synthase"/>
    <property type="match status" value="1"/>
</dbReference>
<dbReference type="FunFam" id="3.40.720.10:FF:000009">
    <property type="entry name" value="Phosphoglycerol transferase I"/>
    <property type="match status" value="1"/>
</dbReference>
<dbReference type="Gene3D" id="3.40.720.10">
    <property type="entry name" value="Alkaline Phosphatase, subunit A"/>
    <property type="match status" value="1"/>
</dbReference>
<dbReference type="HAMAP" id="MF_01070">
    <property type="entry name" value="MdoB_OpgB"/>
    <property type="match status" value="1"/>
</dbReference>
<dbReference type="InterPro" id="IPR017850">
    <property type="entry name" value="Alkaline_phosphatase_core_sf"/>
</dbReference>
<dbReference type="InterPro" id="IPR054288">
    <property type="entry name" value="DUF7024"/>
</dbReference>
<dbReference type="InterPro" id="IPR020881">
    <property type="entry name" value="OpgB"/>
</dbReference>
<dbReference type="InterPro" id="IPR050448">
    <property type="entry name" value="OpgB/LTA_synthase_biosynth"/>
</dbReference>
<dbReference type="InterPro" id="IPR000917">
    <property type="entry name" value="Sulfatase_N"/>
</dbReference>
<dbReference type="NCBIfam" id="NF003000">
    <property type="entry name" value="PRK03776.1"/>
    <property type="match status" value="1"/>
</dbReference>
<dbReference type="PANTHER" id="PTHR47371">
    <property type="entry name" value="LIPOTEICHOIC ACID SYNTHASE"/>
    <property type="match status" value="1"/>
</dbReference>
<dbReference type="PANTHER" id="PTHR47371:SF3">
    <property type="entry name" value="PHOSPHOGLYCEROL TRANSFERASE I"/>
    <property type="match status" value="1"/>
</dbReference>
<dbReference type="Pfam" id="PF22895">
    <property type="entry name" value="DUF7024"/>
    <property type="match status" value="1"/>
</dbReference>
<dbReference type="Pfam" id="PF00884">
    <property type="entry name" value="Sulfatase"/>
    <property type="match status" value="1"/>
</dbReference>
<dbReference type="SUPFAM" id="SSF53649">
    <property type="entry name" value="Alkaline phosphatase-like"/>
    <property type="match status" value="1"/>
</dbReference>
<feature type="chain" id="PRO_1000136627" description="Phosphoglycerol transferase I">
    <location>
        <begin position="1"/>
        <end position="763"/>
    </location>
</feature>
<feature type="transmembrane region" description="Helical" evidence="1">
    <location>
        <begin position="1"/>
        <end position="21"/>
    </location>
</feature>
<feature type="transmembrane region" description="Helical" evidence="1">
    <location>
        <begin position="26"/>
        <end position="46"/>
    </location>
</feature>
<feature type="transmembrane region" description="Helical" evidence="1">
    <location>
        <begin position="77"/>
        <end position="97"/>
    </location>
</feature>
<feature type="transmembrane region" description="Helical" evidence="1">
    <location>
        <begin position="108"/>
        <end position="128"/>
    </location>
</feature>
<sequence>MSELLSFALFLASVLIYAWKAGRNTWWFAATLTVLGLFVVLNITLYASDYFTGDGINDAVLYTLTNSLTGAGIGKYILPGVGIVLALTAVFVSLGWILRRRRHHPHHFGYSLLALLLALGSVDASPAFRQITELVKSQTRDGDPDFAIYYKEPAKTIPNPKLNLVYIYGESLERTYFDNEAFPDLTPELGAIKNESMDFSHTMQLPGTDYTIAGMVASQCGIPLFAPFEGNASASVSSFFPQNICLGDILKNSGYQNYFVQGANLRFAGKDVFLKSHGFDHLYGAEELKGVVADPTYRNDWGFYDDTVLDEAWKKFEELSRSGQRFSLFTLTVDTHHPDGFISRTCNRKRYDFDGKQNQSFSAVSCSQENIATFINKIKASPWFKNTVIVVSSDHLAMNNTAWKYLNKQDRNNLFFVLRGDKPQQETLAVKRNTMDNGATVLDILGGDNFLGLGRSSLSGQSMSEIFLNIKEKTLAWKPDIIRLWKFPKEIKAFTIDQDKNTIAFSGSHFRLPLLLRVSDKRVEPLPESEYSAPLRFQLADFAPRDNFVWVDRCYKMARLWAPELSLSTDWCVSQGQLGGEQRVQHVDKPQWQGKTAFKDTVIDMERYKGNVDTLKIVDNDIRYKADSFIFNVAGAPEEVKQFSGISRPESWGRWSNAQLGDEVKIEYNAPLPKKFDLVITAKAYGTNASKPIPVRIGNEEQTMVLGNEVTTTTLHFDNPNSASTVVIVPPEPIATNEGNILGHSPRKLGIGMVEIKVVEREG</sequence>